<evidence type="ECO:0000255" key="1">
    <source>
        <dbReference type="HAMAP-Rule" id="MF_00033"/>
    </source>
</evidence>
<accession>Q07PT3</accession>
<organism>
    <name type="scientific">Rhodopseudomonas palustris (strain BisA53)</name>
    <dbReference type="NCBI Taxonomy" id="316055"/>
    <lineage>
        <taxon>Bacteria</taxon>
        <taxon>Pseudomonadati</taxon>
        <taxon>Pseudomonadota</taxon>
        <taxon>Alphaproteobacteria</taxon>
        <taxon>Hyphomicrobiales</taxon>
        <taxon>Nitrobacteraceae</taxon>
        <taxon>Rhodopseudomonas</taxon>
    </lineage>
</organism>
<gene>
    <name evidence="1" type="primary">murG</name>
    <name type="ordered locus">RPE_2107</name>
</gene>
<keyword id="KW-0131">Cell cycle</keyword>
<keyword id="KW-0132">Cell division</keyword>
<keyword id="KW-0997">Cell inner membrane</keyword>
<keyword id="KW-1003">Cell membrane</keyword>
<keyword id="KW-0133">Cell shape</keyword>
<keyword id="KW-0961">Cell wall biogenesis/degradation</keyword>
<keyword id="KW-0328">Glycosyltransferase</keyword>
<keyword id="KW-0472">Membrane</keyword>
<keyword id="KW-0573">Peptidoglycan synthesis</keyword>
<keyword id="KW-0808">Transferase</keyword>
<feature type="chain" id="PRO_0000315152" description="UDP-N-acetylglucosamine--N-acetylmuramyl-(pentapeptide) pyrophosphoryl-undecaprenol N-acetylglucosamine transferase">
    <location>
        <begin position="1"/>
        <end position="374"/>
    </location>
</feature>
<feature type="binding site" evidence="1">
    <location>
        <begin position="14"/>
        <end position="16"/>
    </location>
    <ligand>
        <name>UDP-N-acetyl-alpha-D-glucosamine</name>
        <dbReference type="ChEBI" id="CHEBI:57705"/>
    </ligand>
</feature>
<feature type="binding site" evidence="1">
    <location>
        <position position="125"/>
    </location>
    <ligand>
        <name>UDP-N-acetyl-alpha-D-glucosamine</name>
        <dbReference type="ChEBI" id="CHEBI:57705"/>
    </ligand>
</feature>
<feature type="binding site" evidence="1">
    <location>
        <position position="168"/>
    </location>
    <ligand>
        <name>UDP-N-acetyl-alpha-D-glucosamine</name>
        <dbReference type="ChEBI" id="CHEBI:57705"/>
    </ligand>
</feature>
<feature type="binding site" evidence="1">
    <location>
        <position position="196"/>
    </location>
    <ligand>
        <name>UDP-N-acetyl-alpha-D-glucosamine</name>
        <dbReference type="ChEBI" id="CHEBI:57705"/>
    </ligand>
</feature>
<feature type="binding site" evidence="1">
    <location>
        <position position="297"/>
    </location>
    <ligand>
        <name>UDP-N-acetyl-alpha-D-glucosamine</name>
        <dbReference type="ChEBI" id="CHEBI:57705"/>
    </ligand>
</feature>
<comment type="function">
    <text evidence="1">Cell wall formation. Catalyzes the transfer of a GlcNAc subunit on undecaprenyl-pyrophosphoryl-MurNAc-pentapeptide (lipid intermediate I) to form undecaprenyl-pyrophosphoryl-MurNAc-(pentapeptide)GlcNAc (lipid intermediate II).</text>
</comment>
<comment type="catalytic activity">
    <reaction evidence="1">
        <text>di-trans,octa-cis-undecaprenyl diphospho-N-acetyl-alpha-D-muramoyl-L-alanyl-D-glutamyl-meso-2,6-diaminopimeloyl-D-alanyl-D-alanine + UDP-N-acetyl-alpha-D-glucosamine = di-trans,octa-cis-undecaprenyl diphospho-[N-acetyl-alpha-D-glucosaminyl-(1-&gt;4)]-N-acetyl-alpha-D-muramoyl-L-alanyl-D-glutamyl-meso-2,6-diaminopimeloyl-D-alanyl-D-alanine + UDP + H(+)</text>
        <dbReference type="Rhea" id="RHEA:31227"/>
        <dbReference type="ChEBI" id="CHEBI:15378"/>
        <dbReference type="ChEBI" id="CHEBI:57705"/>
        <dbReference type="ChEBI" id="CHEBI:58223"/>
        <dbReference type="ChEBI" id="CHEBI:61387"/>
        <dbReference type="ChEBI" id="CHEBI:61388"/>
        <dbReference type="EC" id="2.4.1.227"/>
    </reaction>
</comment>
<comment type="pathway">
    <text evidence="1">Cell wall biogenesis; peptidoglycan biosynthesis.</text>
</comment>
<comment type="subcellular location">
    <subcellularLocation>
        <location evidence="1">Cell inner membrane</location>
        <topology evidence="1">Peripheral membrane protein</topology>
        <orientation evidence="1">Cytoplasmic side</orientation>
    </subcellularLocation>
</comment>
<comment type="similarity">
    <text evidence="1">Belongs to the glycosyltransferase 28 family. MurG subfamily.</text>
</comment>
<reference key="1">
    <citation type="submission" date="2006-09" db="EMBL/GenBank/DDBJ databases">
        <title>Complete sequence of Rhodopseudomonas palustris BisA53.</title>
        <authorList>
            <consortium name="US DOE Joint Genome Institute"/>
            <person name="Copeland A."/>
            <person name="Lucas S."/>
            <person name="Lapidus A."/>
            <person name="Barry K."/>
            <person name="Detter J.C."/>
            <person name="Glavina del Rio T."/>
            <person name="Hammon N."/>
            <person name="Israni S."/>
            <person name="Dalin E."/>
            <person name="Tice H."/>
            <person name="Pitluck S."/>
            <person name="Chain P."/>
            <person name="Malfatti S."/>
            <person name="Shin M."/>
            <person name="Vergez L."/>
            <person name="Schmutz J."/>
            <person name="Larimer F."/>
            <person name="Land M."/>
            <person name="Hauser L."/>
            <person name="Pelletier D.A."/>
            <person name="Kyrpides N."/>
            <person name="Kim E."/>
            <person name="Harwood C.S."/>
            <person name="Oda Y."/>
            <person name="Richardson P."/>
        </authorList>
    </citation>
    <scope>NUCLEOTIDE SEQUENCE [LARGE SCALE GENOMIC DNA]</scope>
    <source>
        <strain>BisA53</strain>
    </source>
</reference>
<protein>
    <recommendedName>
        <fullName evidence="1">UDP-N-acetylglucosamine--N-acetylmuramyl-(pentapeptide) pyrophosphoryl-undecaprenol N-acetylglucosamine transferase</fullName>
        <ecNumber evidence="1">2.4.1.227</ecNumber>
    </recommendedName>
    <alternativeName>
        <fullName evidence="1">Undecaprenyl-PP-MurNAc-pentapeptide-UDPGlcNAc GlcNAc transferase</fullName>
    </alternativeName>
</protein>
<proteinExistence type="inferred from homology"/>
<sequence>MEPAPLILLAAGGTGGHLFPAEALGVVLMQRGLRVRLVTDSRALRYSGLFSREMTDVVPSETVRGRSPVALARTGAMLGAGTLKALTLMWRLKPAAVIGFGGYPTLPPLIAARLMKIPTLVHDSNAVMGRANRFLSAHVTAIATSLPGVLDRDPALAAKTTTTGTPMRPAILAAAAVPYAAPEPDGPLRLLVTGGSQGARIMADVVPHAIEQLSPELWRRLVLVQQVRDEDMARVRAVYDRLKLNFELEPFFSDLPARLASSHLVVSRSGAGTVAELAAIGRPSILVPLPGALDQDQFANAGVLAKADAAIRIAQHDFTPARLAQEITALAADPERLTAMAAGARGVGRLDAAERLADLVVEVAGIPAKTMMYQ</sequence>
<name>MURG_RHOP5</name>
<dbReference type="EC" id="2.4.1.227" evidence="1"/>
<dbReference type="EMBL" id="CP000463">
    <property type="protein sequence ID" value="ABJ06051.1"/>
    <property type="molecule type" value="Genomic_DNA"/>
</dbReference>
<dbReference type="SMR" id="Q07PT3"/>
<dbReference type="STRING" id="316055.RPE_2107"/>
<dbReference type="CAZy" id="GT28">
    <property type="family name" value="Glycosyltransferase Family 28"/>
</dbReference>
<dbReference type="KEGG" id="rpe:RPE_2107"/>
<dbReference type="eggNOG" id="COG0707">
    <property type="taxonomic scope" value="Bacteria"/>
</dbReference>
<dbReference type="HOGENOM" id="CLU_037404_2_1_5"/>
<dbReference type="OrthoDB" id="9808936at2"/>
<dbReference type="UniPathway" id="UPA00219"/>
<dbReference type="GO" id="GO:0005886">
    <property type="term" value="C:plasma membrane"/>
    <property type="evidence" value="ECO:0007669"/>
    <property type="project" value="UniProtKB-SubCell"/>
</dbReference>
<dbReference type="GO" id="GO:0051991">
    <property type="term" value="F:UDP-N-acetyl-D-glucosamine:N-acetylmuramoyl-L-alanyl-D-glutamyl-meso-2,6-diaminopimelyl-D-alanyl-D-alanine-diphosphoundecaprenol 4-beta-N-acetylglucosaminlytransferase activity"/>
    <property type="evidence" value="ECO:0007669"/>
    <property type="project" value="RHEA"/>
</dbReference>
<dbReference type="GO" id="GO:0050511">
    <property type="term" value="F:undecaprenyldiphospho-muramoylpentapeptide beta-N-acetylglucosaminyltransferase activity"/>
    <property type="evidence" value="ECO:0007669"/>
    <property type="project" value="UniProtKB-UniRule"/>
</dbReference>
<dbReference type="GO" id="GO:0005975">
    <property type="term" value="P:carbohydrate metabolic process"/>
    <property type="evidence" value="ECO:0007669"/>
    <property type="project" value="InterPro"/>
</dbReference>
<dbReference type="GO" id="GO:0051301">
    <property type="term" value="P:cell division"/>
    <property type="evidence" value="ECO:0007669"/>
    <property type="project" value="UniProtKB-KW"/>
</dbReference>
<dbReference type="GO" id="GO:0071555">
    <property type="term" value="P:cell wall organization"/>
    <property type="evidence" value="ECO:0007669"/>
    <property type="project" value="UniProtKB-KW"/>
</dbReference>
<dbReference type="GO" id="GO:0030259">
    <property type="term" value="P:lipid glycosylation"/>
    <property type="evidence" value="ECO:0007669"/>
    <property type="project" value="UniProtKB-UniRule"/>
</dbReference>
<dbReference type="GO" id="GO:0009252">
    <property type="term" value="P:peptidoglycan biosynthetic process"/>
    <property type="evidence" value="ECO:0007669"/>
    <property type="project" value="UniProtKB-UniRule"/>
</dbReference>
<dbReference type="GO" id="GO:0008360">
    <property type="term" value="P:regulation of cell shape"/>
    <property type="evidence" value="ECO:0007669"/>
    <property type="project" value="UniProtKB-KW"/>
</dbReference>
<dbReference type="CDD" id="cd03785">
    <property type="entry name" value="GT28_MurG"/>
    <property type="match status" value="1"/>
</dbReference>
<dbReference type="Gene3D" id="3.40.50.2000">
    <property type="entry name" value="Glycogen Phosphorylase B"/>
    <property type="match status" value="2"/>
</dbReference>
<dbReference type="HAMAP" id="MF_00033">
    <property type="entry name" value="MurG"/>
    <property type="match status" value="1"/>
</dbReference>
<dbReference type="InterPro" id="IPR006009">
    <property type="entry name" value="GlcNAc_MurG"/>
</dbReference>
<dbReference type="InterPro" id="IPR007235">
    <property type="entry name" value="Glyco_trans_28_C"/>
</dbReference>
<dbReference type="InterPro" id="IPR004276">
    <property type="entry name" value="GlycoTrans_28_N"/>
</dbReference>
<dbReference type="NCBIfam" id="TIGR01133">
    <property type="entry name" value="murG"/>
    <property type="match status" value="1"/>
</dbReference>
<dbReference type="PANTHER" id="PTHR21015:SF22">
    <property type="entry name" value="GLYCOSYLTRANSFERASE"/>
    <property type="match status" value="1"/>
</dbReference>
<dbReference type="PANTHER" id="PTHR21015">
    <property type="entry name" value="UDP-N-ACETYLGLUCOSAMINE--N-ACETYLMURAMYL-(PENTAPEPTIDE) PYROPHOSPHORYL-UNDECAPRENOL N-ACETYLGLUCOSAMINE TRANSFERASE 1"/>
    <property type="match status" value="1"/>
</dbReference>
<dbReference type="Pfam" id="PF04101">
    <property type="entry name" value="Glyco_tran_28_C"/>
    <property type="match status" value="1"/>
</dbReference>
<dbReference type="Pfam" id="PF03033">
    <property type="entry name" value="Glyco_transf_28"/>
    <property type="match status" value="1"/>
</dbReference>
<dbReference type="SUPFAM" id="SSF53756">
    <property type="entry name" value="UDP-Glycosyltransferase/glycogen phosphorylase"/>
    <property type="match status" value="1"/>
</dbReference>